<name>SYC_THEYD</name>
<feature type="chain" id="PRO_1000199087" description="Cysteine--tRNA ligase">
    <location>
        <begin position="1"/>
        <end position="487"/>
    </location>
</feature>
<feature type="short sequence motif" description="'HIGH' region">
    <location>
        <begin position="29"/>
        <end position="39"/>
    </location>
</feature>
<feature type="short sequence motif" description="'KMSKS' region">
    <location>
        <begin position="268"/>
        <end position="272"/>
    </location>
</feature>
<feature type="binding site" evidence="1">
    <location>
        <position position="27"/>
    </location>
    <ligand>
        <name>Zn(2+)</name>
        <dbReference type="ChEBI" id="CHEBI:29105"/>
    </ligand>
</feature>
<feature type="binding site" evidence="1">
    <location>
        <position position="211"/>
    </location>
    <ligand>
        <name>Zn(2+)</name>
        <dbReference type="ChEBI" id="CHEBI:29105"/>
    </ligand>
</feature>
<feature type="binding site" evidence="1">
    <location>
        <position position="236"/>
    </location>
    <ligand>
        <name>Zn(2+)</name>
        <dbReference type="ChEBI" id="CHEBI:29105"/>
    </ligand>
</feature>
<feature type="binding site" evidence="1">
    <location>
        <position position="240"/>
    </location>
    <ligand>
        <name>Zn(2+)</name>
        <dbReference type="ChEBI" id="CHEBI:29105"/>
    </ligand>
</feature>
<feature type="binding site" evidence="1">
    <location>
        <position position="271"/>
    </location>
    <ligand>
        <name>ATP</name>
        <dbReference type="ChEBI" id="CHEBI:30616"/>
    </ligand>
</feature>
<reference key="1">
    <citation type="submission" date="2008-08" db="EMBL/GenBank/DDBJ databases">
        <title>The complete genome sequence of Thermodesulfovibrio yellowstonii strain ATCC 51303 / DSM 11347 / YP87.</title>
        <authorList>
            <person name="Dodson R.J."/>
            <person name="Durkin A.S."/>
            <person name="Wu M."/>
            <person name="Eisen J."/>
            <person name="Sutton G."/>
        </authorList>
    </citation>
    <scope>NUCLEOTIDE SEQUENCE [LARGE SCALE GENOMIC DNA]</scope>
    <source>
        <strain>ATCC 51303 / DSM 11347 / YP87</strain>
    </source>
</reference>
<protein>
    <recommendedName>
        <fullName evidence="1">Cysteine--tRNA ligase</fullName>
        <ecNumber evidence="1">6.1.1.16</ecNumber>
    </recommendedName>
    <alternativeName>
        <fullName evidence="1">Cysteinyl-tRNA synthetase</fullName>
        <shortName evidence="1">CysRS</shortName>
    </alternativeName>
</protein>
<keyword id="KW-0030">Aminoacyl-tRNA synthetase</keyword>
<keyword id="KW-0067">ATP-binding</keyword>
<keyword id="KW-0963">Cytoplasm</keyword>
<keyword id="KW-0436">Ligase</keyword>
<keyword id="KW-0479">Metal-binding</keyword>
<keyword id="KW-0547">Nucleotide-binding</keyword>
<keyword id="KW-0648">Protein biosynthesis</keyword>
<keyword id="KW-1185">Reference proteome</keyword>
<keyword id="KW-0862">Zinc</keyword>
<proteinExistence type="inferred from homology"/>
<comment type="catalytic activity">
    <reaction evidence="1">
        <text>tRNA(Cys) + L-cysteine + ATP = L-cysteinyl-tRNA(Cys) + AMP + diphosphate</text>
        <dbReference type="Rhea" id="RHEA:17773"/>
        <dbReference type="Rhea" id="RHEA-COMP:9661"/>
        <dbReference type="Rhea" id="RHEA-COMP:9679"/>
        <dbReference type="ChEBI" id="CHEBI:30616"/>
        <dbReference type="ChEBI" id="CHEBI:33019"/>
        <dbReference type="ChEBI" id="CHEBI:35235"/>
        <dbReference type="ChEBI" id="CHEBI:78442"/>
        <dbReference type="ChEBI" id="CHEBI:78517"/>
        <dbReference type="ChEBI" id="CHEBI:456215"/>
        <dbReference type="EC" id="6.1.1.16"/>
    </reaction>
</comment>
<comment type="cofactor">
    <cofactor evidence="1">
        <name>Zn(2+)</name>
        <dbReference type="ChEBI" id="CHEBI:29105"/>
    </cofactor>
    <text evidence="1">Binds 1 zinc ion per subunit.</text>
</comment>
<comment type="subunit">
    <text evidence="1">Monomer.</text>
</comment>
<comment type="subcellular location">
    <subcellularLocation>
        <location evidence="1">Cytoplasm</location>
    </subcellularLocation>
</comment>
<comment type="similarity">
    <text evidence="1">Belongs to the class-I aminoacyl-tRNA synthetase family.</text>
</comment>
<dbReference type="EC" id="6.1.1.16" evidence="1"/>
<dbReference type="EMBL" id="CP001147">
    <property type="protein sequence ID" value="ACI21675.1"/>
    <property type="molecule type" value="Genomic_DNA"/>
</dbReference>
<dbReference type="RefSeq" id="WP_012546384.1">
    <property type="nucleotide sequence ID" value="NC_011296.1"/>
</dbReference>
<dbReference type="RefSeq" id="YP_002249765.1">
    <property type="nucleotide sequence ID" value="NC_011296.1"/>
</dbReference>
<dbReference type="SMR" id="B5YID4"/>
<dbReference type="FunCoup" id="B5YID4">
    <property type="interactions" value="399"/>
</dbReference>
<dbReference type="STRING" id="289376.THEYE_A1975"/>
<dbReference type="EnsemblBacteria" id="ACI21675">
    <property type="protein sequence ID" value="ACI21675"/>
    <property type="gene ID" value="THEYE_A1975"/>
</dbReference>
<dbReference type="KEGG" id="tye:THEYE_A1975"/>
<dbReference type="PATRIC" id="fig|289376.4.peg.1930"/>
<dbReference type="eggNOG" id="COG0215">
    <property type="taxonomic scope" value="Bacteria"/>
</dbReference>
<dbReference type="HOGENOM" id="CLU_013528_0_1_0"/>
<dbReference type="InParanoid" id="B5YID4"/>
<dbReference type="OrthoDB" id="9815130at2"/>
<dbReference type="Proteomes" id="UP000000718">
    <property type="component" value="Chromosome"/>
</dbReference>
<dbReference type="GO" id="GO:0005737">
    <property type="term" value="C:cytoplasm"/>
    <property type="evidence" value="ECO:0000318"/>
    <property type="project" value="GO_Central"/>
</dbReference>
<dbReference type="GO" id="GO:0005829">
    <property type="term" value="C:cytosol"/>
    <property type="evidence" value="ECO:0000318"/>
    <property type="project" value="GO_Central"/>
</dbReference>
<dbReference type="GO" id="GO:0005524">
    <property type="term" value="F:ATP binding"/>
    <property type="evidence" value="ECO:0000318"/>
    <property type="project" value="GO_Central"/>
</dbReference>
<dbReference type="GO" id="GO:0004817">
    <property type="term" value="F:cysteine-tRNA ligase activity"/>
    <property type="evidence" value="ECO:0000318"/>
    <property type="project" value="GO_Central"/>
</dbReference>
<dbReference type="GO" id="GO:0008270">
    <property type="term" value="F:zinc ion binding"/>
    <property type="evidence" value="ECO:0007669"/>
    <property type="project" value="UniProtKB-UniRule"/>
</dbReference>
<dbReference type="GO" id="GO:0006423">
    <property type="term" value="P:cysteinyl-tRNA aminoacylation"/>
    <property type="evidence" value="ECO:0000318"/>
    <property type="project" value="GO_Central"/>
</dbReference>
<dbReference type="CDD" id="cd00672">
    <property type="entry name" value="CysRS_core"/>
    <property type="match status" value="1"/>
</dbReference>
<dbReference type="FunFam" id="3.40.50.620:FF:000009">
    <property type="entry name" value="Cysteine--tRNA ligase"/>
    <property type="match status" value="1"/>
</dbReference>
<dbReference type="Gene3D" id="1.20.120.1910">
    <property type="entry name" value="Cysteine-tRNA ligase, C-terminal anti-codon recognition domain"/>
    <property type="match status" value="1"/>
</dbReference>
<dbReference type="Gene3D" id="3.40.50.620">
    <property type="entry name" value="HUPs"/>
    <property type="match status" value="1"/>
</dbReference>
<dbReference type="HAMAP" id="MF_00041">
    <property type="entry name" value="Cys_tRNA_synth"/>
    <property type="match status" value="1"/>
</dbReference>
<dbReference type="InterPro" id="IPR015803">
    <property type="entry name" value="Cys-tRNA-ligase"/>
</dbReference>
<dbReference type="InterPro" id="IPR015273">
    <property type="entry name" value="Cys-tRNA-synt_Ia_DALR"/>
</dbReference>
<dbReference type="InterPro" id="IPR024909">
    <property type="entry name" value="Cys-tRNA/MSH_ligase"/>
</dbReference>
<dbReference type="InterPro" id="IPR056411">
    <property type="entry name" value="CysS_C"/>
</dbReference>
<dbReference type="InterPro" id="IPR014729">
    <property type="entry name" value="Rossmann-like_a/b/a_fold"/>
</dbReference>
<dbReference type="InterPro" id="IPR032678">
    <property type="entry name" value="tRNA-synt_1_cat_dom"/>
</dbReference>
<dbReference type="InterPro" id="IPR009080">
    <property type="entry name" value="tRNAsynth_Ia_anticodon-bd"/>
</dbReference>
<dbReference type="NCBIfam" id="TIGR00435">
    <property type="entry name" value="cysS"/>
    <property type="match status" value="1"/>
</dbReference>
<dbReference type="PANTHER" id="PTHR10890:SF3">
    <property type="entry name" value="CYSTEINE--TRNA LIGASE, CYTOPLASMIC"/>
    <property type="match status" value="1"/>
</dbReference>
<dbReference type="PANTHER" id="PTHR10890">
    <property type="entry name" value="CYSTEINYL-TRNA SYNTHETASE"/>
    <property type="match status" value="1"/>
</dbReference>
<dbReference type="Pfam" id="PF23493">
    <property type="entry name" value="CysS_C"/>
    <property type="match status" value="1"/>
</dbReference>
<dbReference type="Pfam" id="PF09190">
    <property type="entry name" value="DALR_2"/>
    <property type="match status" value="1"/>
</dbReference>
<dbReference type="Pfam" id="PF01406">
    <property type="entry name" value="tRNA-synt_1e"/>
    <property type="match status" value="1"/>
</dbReference>
<dbReference type="PRINTS" id="PR00983">
    <property type="entry name" value="TRNASYNTHCYS"/>
</dbReference>
<dbReference type="SMART" id="SM00840">
    <property type="entry name" value="DALR_2"/>
    <property type="match status" value="1"/>
</dbReference>
<dbReference type="SUPFAM" id="SSF47323">
    <property type="entry name" value="Anticodon-binding domain of a subclass of class I aminoacyl-tRNA synthetases"/>
    <property type="match status" value="1"/>
</dbReference>
<dbReference type="SUPFAM" id="SSF52374">
    <property type="entry name" value="Nucleotidylyl transferase"/>
    <property type="match status" value="1"/>
</dbReference>
<gene>
    <name evidence="1" type="primary">cysS</name>
    <name type="ordered locus">THEYE_A1975</name>
</gene>
<organism>
    <name type="scientific">Thermodesulfovibrio yellowstonii (strain ATCC 51303 / DSM 11347 / YP87)</name>
    <dbReference type="NCBI Taxonomy" id="289376"/>
    <lineage>
        <taxon>Bacteria</taxon>
        <taxon>Pseudomonadati</taxon>
        <taxon>Nitrospirota</taxon>
        <taxon>Thermodesulfovibrionia</taxon>
        <taxon>Thermodesulfovibrionales</taxon>
        <taxon>Thermodesulfovibrionaceae</taxon>
        <taxon>Thermodesulfovibrio</taxon>
    </lineage>
</organism>
<evidence type="ECO:0000255" key="1">
    <source>
        <dbReference type="HAMAP-Rule" id="MF_00041"/>
    </source>
</evidence>
<sequence>MRVFNTLTDKLEEFKPINDKKVGIYACGVTVYDLCHIGHARSAVVFDVIVKYLRYKGYEVKFVKNFTDIDDKIINRANKEGVSWKEIAEKYTGEYYKDMDRLGITRADIEPKATEHINEMIEIIQTLINKGYAYEIEEGQAKSVYFSVEKFPQYGKLSKKKIDELISGARVEVDERKKSPLDFALWKASKPGEPWWDSPWGKGRPGWHIECSAMSIKYLGETFDIHGGGADLIFPHHENEIAQSEAFTGKPFAKYWIHNGFVTINKEKMSKSLGNVLNIRDLLDIYDAEALRLFLLSSHYRSPIEFAHEYIKEAEATVDRVYSTIMRIEDFEKIEINDKSSIEFDKVKAMLENLKPEFEKAMDDDFNTAKALGILFEFIKEINRFMDKKPSQNKEIDFLVTAKRAIKEIGSVLNLFQRQPVDWYRDLLKVKKIAIKEEEINRLIKERTEARKNKDWKKADSIREQLLSKGIILEDKPDRTIWKVKIN</sequence>
<accession>B5YID4</accession>